<protein>
    <recommendedName>
        <fullName evidence="1">Pyridoxine/pyridoxamine 5'-phosphate oxidase</fullName>
        <ecNumber evidence="1">1.4.3.5</ecNumber>
    </recommendedName>
    <alternativeName>
        <fullName evidence="1">PNP/PMP oxidase</fullName>
        <shortName evidence="1">PNPOx</shortName>
    </alternativeName>
    <alternativeName>
        <fullName evidence="1">Pyridoxal 5'-phosphate synthase</fullName>
    </alternativeName>
</protein>
<feature type="chain" id="PRO_1000186325" description="Pyridoxine/pyridoxamine 5'-phosphate oxidase">
    <location>
        <begin position="1"/>
        <end position="215"/>
    </location>
</feature>
<feature type="binding site" evidence="1">
    <location>
        <begin position="9"/>
        <end position="12"/>
    </location>
    <ligand>
        <name>substrate</name>
    </ligand>
</feature>
<feature type="binding site" evidence="1">
    <location>
        <begin position="64"/>
        <end position="69"/>
    </location>
    <ligand>
        <name>FMN</name>
        <dbReference type="ChEBI" id="CHEBI:58210"/>
    </ligand>
</feature>
<feature type="binding site" evidence="1">
    <location>
        <position position="69"/>
    </location>
    <ligand>
        <name>substrate</name>
    </ligand>
</feature>
<feature type="binding site" evidence="1">
    <location>
        <begin position="79"/>
        <end position="80"/>
    </location>
    <ligand>
        <name>FMN</name>
        <dbReference type="ChEBI" id="CHEBI:58210"/>
    </ligand>
</feature>
<feature type="binding site" evidence="1">
    <location>
        <position position="86"/>
    </location>
    <ligand>
        <name>FMN</name>
        <dbReference type="ChEBI" id="CHEBI:58210"/>
    </ligand>
</feature>
<feature type="binding site" evidence="1">
    <location>
        <position position="108"/>
    </location>
    <ligand>
        <name>FMN</name>
        <dbReference type="ChEBI" id="CHEBI:58210"/>
    </ligand>
</feature>
<feature type="binding site" evidence="1">
    <location>
        <position position="126"/>
    </location>
    <ligand>
        <name>substrate</name>
    </ligand>
</feature>
<feature type="binding site" evidence="1">
    <location>
        <position position="130"/>
    </location>
    <ligand>
        <name>substrate</name>
    </ligand>
</feature>
<feature type="binding site" evidence="1">
    <location>
        <position position="134"/>
    </location>
    <ligand>
        <name>substrate</name>
    </ligand>
</feature>
<feature type="binding site" evidence="1">
    <location>
        <begin position="143"/>
        <end position="144"/>
    </location>
    <ligand>
        <name>FMN</name>
        <dbReference type="ChEBI" id="CHEBI:58210"/>
    </ligand>
</feature>
<feature type="binding site" evidence="1">
    <location>
        <position position="188"/>
    </location>
    <ligand>
        <name>FMN</name>
        <dbReference type="ChEBI" id="CHEBI:58210"/>
    </ligand>
</feature>
<feature type="binding site" evidence="1">
    <location>
        <begin position="194"/>
        <end position="196"/>
    </location>
    <ligand>
        <name>substrate</name>
    </ligand>
</feature>
<feature type="binding site" evidence="1">
    <location>
        <position position="198"/>
    </location>
    <ligand>
        <name>FMN</name>
        <dbReference type="ChEBI" id="CHEBI:58210"/>
    </ligand>
</feature>
<organism>
    <name type="scientific">Pseudomonas aeruginosa (strain LESB58)</name>
    <dbReference type="NCBI Taxonomy" id="557722"/>
    <lineage>
        <taxon>Bacteria</taxon>
        <taxon>Pseudomonadati</taxon>
        <taxon>Pseudomonadota</taxon>
        <taxon>Gammaproteobacteria</taxon>
        <taxon>Pseudomonadales</taxon>
        <taxon>Pseudomonadaceae</taxon>
        <taxon>Pseudomonas</taxon>
    </lineage>
</organism>
<keyword id="KW-0285">Flavoprotein</keyword>
<keyword id="KW-0288">FMN</keyword>
<keyword id="KW-0560">Oxidoreductase</keyword>
<keyword id="KW-0664">Pyridoxine biosynthesis</keyword>
<name>PDXH_PSEA8</name>
<gene>
    <name evidence="1" type="primary">pdxH</name>
    <name type="ordered locus">PLES_42741</name>
</gene>
<reference key="1">
    <citation type="journal article" date="2009" name="Genome Res.">
        <title>Newly introduced genomic prophage islands are critical determinants of in vivo competitiveness in the Liverpool epidemic strain of Pseudomonas aeruginosa.</title>
        <authorList>
            <person name="Winstanley C."/>
            <person name="Langille M.G.I."/>
            <person name="Fothergill J.L."/>
            <person name="Kukavica-Ibrulj I."/>
            <person name="Paradis-Bleau C."/>
            <person name="Sanschagrin F."/>
            <person name="Thomson N.R."/>
            <person name="Winsor G.L."/>
            <person name="Quail M.A."/>
            <person name="Lennard N."/>
            <person name="Bignell A."/>
            <person name="Clarke L."/>
            <person name="Seeger K."/>
            <person name="Saunders D."/>
            <person name="Harris D."/>
            <person name="Parkhill J."/>
            <person name="Hancock R.E.W."/>
            <person name="Brinkman F.S.L."/>
            <person name="Levesque R.C."/>
        </authorList>
    </citation>
    <scope>NUCLEOTIDE SEQUENCE [LARGE SCALE GENOMIC DNA]</scope>
    <source>
        <strain>LESB58</strain>
    </source>
</reference>
<accession>B7UXE2</accession>
<comment type="function">
    <text evidence="1">Catalyzes the oxidation of either pyridoxine 5'-phosphate (PNP) or pyridoxamine 5'-phosphate (PMP) into pyridoxal 5'-phosphate (PLP).</text>
</comment>
<comment type="catalytic activity">
    <reaction evidence="1">
        <text>pyridoxamine 5'-phosphate + O2 + H2O = pyridoxal 5'-phosphate + H2O2 + NH4(+)</text>
        <dbReference type="Rhea" id="RHEA:15817"/>
        <dbReference type="ChEBI" id="CHEBI:15377"/>
        <dbReference type="ChEBI" id="CHEBI:15379"/>
        <dbReference type="ChEBI" id="CHEBI:16240"/>
        <dbReference type="ChEBI" id="CHEBI:28938"/>
        <dbReference type="ChEBI" id="CHEBI:58451"/>
        <dbReference type="ChEBI" id="CHEBI:597326"/>
        <dbReference type="EC" id="1.4.3.5"/>
    </reaction>
</comment>
<comment type="catalytic activity">
    <reaction evidence="1">
        <text>pyridoxine 5'-phosphate + O2 = pyridoxal 5'-phosphate + H2O2</text>
        <dbReference type="Rhea" id="RHEA:15149"/>
        <dbReference type="ChEBI" id="CHEBI:15379"/>
        <dbReference type="ChEBI" id="CHEBI:16240"/>
        <dbReference type="ChEBI" id="CHEBI:58589"/>
        <dbReference type="ChEBI" id="CHEBI:597326"/>
        <dbReference type="EC" id="1.4.3.5"/>
    </reaction>
</comment>
<comment type="cofactor">
    <cofactor evidence="1">
        <name>FMN</name>
        <dbReference type="ChEBI" id="CHEBI:58210"/>
    </cofactor>
    <text evidence="1">Binds 1 FMN per subunit.</text>
</comment>
<comment type="pathway">
    <text evidence="1">Cofactor metabolism; pyridoxal 5'-phosphate salvage; pyridoxal 5'-phosphate from pyridoxamine 5'-phosphate: step 1/1.</text>
</comment>
<comment type="pathway">
    <text evidence="1">Cofactor metabolism; pyridoxal 5'-phosphate salvage; pyridoxal 5'-phosphate from pyridoxine 5'-phosphate: step 1/1.</text>
</comment>
<comment type="subunit">
    <text evidence="1">Homodimer.</text>
</comment>
<comment type="similarity">
    <text evidence="1">Belongs to the pyridoxamine 5'-phosphate oxidase family.</text>
</comment>
<dbReference type="EC" id="1.4.3.5" evidence="1"/>
<dbReference type="EMBL" id="FM209186">
    <property type="protein sequence ID" value="CAW29029.1"/>
    <property type="molecule type" value="Genomic_DNA"/>
</dbReference>
<dbReference type="RefSeq" id="WP_003082041.1">
    <property type="nucleotide sequence ID" value="NC_011770.1"/>
</dbReference>
<dbReference type="SMR" id="B7UXE2"/>
<dbReference type="KEGG" id="pag:PLES_42741"/>
<dbReference type="HOGENOM" id="CLU_032263_2_2_6"/>
<dbReference type="UniPathway" id="UPA01068">
    <property type="reaction ID" value="UER00304"/>
</dbReference>
<dbReference type="UniPathway" id="UPA01068">
    <property type="reaction ID" value="UER00305"/>
</dbReference>
<dbReference type="GO" id="GO:0010181">
    <property type="term" value="F:FMN binding"/>
    <property type="evidence" value="ECO:0007669"/>
    <property type="project" value="UniProtKB-UniRule"/>
</dbReference>
<dbReference type="GO" id="GO:0004733">
    <property type="term" value="F:pyridoxamine phosphate oxidase activity"/>
    <property type="evidence" value="ECO:0007669"/>
    <property type="project" value="UniProtKB-UniRule"/>
</dbReference>
<dbReference type="GO" id="GO:0008615">
    <property type="term" value="P:pyridoxine biosynthetic process"/>
    <property type="evidence" value="ECO:0007669"/>
    <property type="project" value="UniProtKB-KW"/>
</dbReference>
<dbReference type="FunFam" id="2.30.110.10:FF:000011">
    <property type="entry name" value="Chromosome 7, whole genome shotgun sequence"/>
    <property type="match status" value="1"/>
</dbReference>
<dbReference type="Gene3D" id="2.30.110.10">
    <property type="entry name" value="Electron Transport, Fmn-binding Protein, Chain A"/>
    <property type="match status" value="1"/>
</dbReference>
<dbReference type="HAMAP" id="MF_01629">
    <property type="entry name" value="PdxH"/>
    <property type="match status" value="1"/>
</dbReference>
<dbReference type="InterPro" id="IPR000659">
    <property type="entry name" value="Pyridox_Oxase"/>
</dbReference>
<dbReference type="InterPro" id="IPR019740">
    <property type="entry name" value="Pyridox_Oxase_CS"/>
</dbReference>
<dbReference type="InterPro" id="IPR011576">
    <property type="entry name" value="Pyridox_Oxase_N"/>
</dbReference>
<dbReference type="InterPro" id="IPR019576">
    <property type="entry name" value="Pyridoxamine_oxidase_dimer_C"/>
</dbReference>
<dbReference type="InterPro" id="IPR012349">
    <property type="entry name" value="Split_barrel_FMN-bd"/>
</dbReference>
<dbReference type="NCBIfam" id="TIGR00558">
    <property type="entry name" value="pdxH"/>
    <property type="match status" value="1"/>
</dbReference>
<dbReference type="NCBIfam" id="NF004231">
    <property type="entry name" value="PRK05679.1"/>
    <property type="match status" value="1"/>
</dbReference>
<dbReference type="PANTHER" id="PTHR10851:SF0">
    <property type="entry name" value="PYRIDOXINE-5'-PHOSPHATE OXIDASE"/>
    <property type="match status" value="1"/>
</dbReference>
<dbReference type="PANTHER" id="PTHR10851">
    <property type="entry name" value="PYRIDOXINE-5-PHOSPHATE OXIDASE"/>
    <property type="match status" value="1"/>
</dbReference>
<dbReference type="Pfam" id="PF10590">
    <property type="entry name" value="PNP_phzG_C"/>
    <property type="match status" value="1"/>
</dbReference>
<dbReference type="Pfam" id="PF01243">
    <property type="entry name" value="PNPOx_N"/>
    <property type="match status" value="1"/>
</dbReference>
<dbReference type="PIRSF" id="PIRSF000190">
    <property type="entry name" value="Pyd_amn-ph_oxd"/>
    <property type="match status" value="1"/>
</dbReference>
<dbReference type="SUPFAM" id="SSF50475">
    <property type="entry name" value="FMN-binding split barrel"/>
    <property type="match status" value="1"/>
</dbReference>
<dbReference type="PROSITE" id="PS01064">
    <property type="entry name" value="PYRIDOX_OXIDASE"/>
    <property type="match status" value="1"/>
</dbReference>
<proteinExistence type="inferred from homology"/>
<evidence type="ECO:0000255" key="1">
    <source>
        <dbReference type="HAMAP-Rule" id="MF_01629"/>
    </source>
</evidence>
<sequence length="215" mass="24848">MTQSLADMRREYTRDGLSEANAPSDPFSLFRQWFDDAVKTERLPVEPNAMTLATVDADGYPHCRILLLKGLDERGFTFFTNYESAKGRQLAANPRAAMTFFWPALERQVRIEGSVEKVTPEESDAYYQVRPLGSRLGAWASPQSRVIADRAELERLLAETERRFADQPPSCPEHWGGYRLLPQRIEFWQGRPSRLHDRLDYRRQDGGWSRERLAP</sequence>